<accession>O66905</accession>
<evidence type="ECO:0000255" key="1">
    <source>
        <dbReference type="HAMAP-Rule" id="MF_01043"/>
    </source>
</evidence>
<evidence type="ECO:0007829" key="2">
    <source>
        <dbReference type="PDB" id="5XJ5"/>
    </source>
</evidence>
<keyword id="KW-0002">3D-structure</keyword>
<keyword id="KW-0997">Cell inner membrane</keyword>
<keyword id="KW-1003">Cell membrane</keyword>
<keyword id="KW-0444">Lipid biosynthesis</keyword>
<keyword id="KW-0443">Lipid metabolism</keyword>
<keyword id="KW-0472">Membrane</keyword>
<keyword id="KW-0594">Phospholipid biosynthesis</keyword>
<keyword id="KW-1208">Phospholipid metabolism</keyword>
<keyword id="KW-1185">Reference proteome</keyword>
<keyword id="KW-0808">Transferase</keyword>
<keyword id="KW-0812">Transmembrane</keyword>
<keyword id="KW-1133">Transmembrane helix</keyword>
<sequence length="192" mass="20940">MKALFLVIFAYLLGSITFGEVIAKLKGVDLRNVGSGNVGATNVTRALGKKYGVLVFFLDFLKGFIPALIAVKSFGIDSWVLTFTGLASVLGHMYPVFFGFKGGKGVATALGVVFAVSPSVALFSFLVWLGIFLWKRYVSLASITATISAFLFLFVAGYPVNVLFMAIVIGALIIYRHRENINRLLTGREHRF</sequence>
<dbReference type="EC" id="2.3.1.275" evidence="1"/>
<dbReference type="EMBL" id="AE000657">
    <property type="protein sequence ID" value="AAC06869.1"/>
    <property type="molecule type" value="Genomic_DNA"/>
</dbReference>
<dbReference type="PIR" id="E70359">
    <property type="entry name" value="E70359"/>
</dbReference>
<dbReference type="RefSeq" id="NP_213465.1">
    <property type="nucleotide sequence ID" value="NC_000918.1"/>
</dbReference>
<dbReference type="RefSeq" id="WP_010880403.1">
    <property type="nucleotide sequence ID" value="NC_000918.1"/>
</dbReference>
<dbReference type="PDB" id="5XJ5">
    <property type="method" value="X-ray"/>
    <property type="resolution" value="1.48 A"/>
    <property type="chains" value="A=3-192"/>
</dbReference>
<dbReference type="PDB" id="5XJ6">
    <property type="method" value="X-ray"/>
    <property type="resolution" value="2.37 A"/>
    <property type="chains" value="A=3-192"/>
</dbReference>
<dbReference type="PDB" id="5XJ7">
    <property type="method" value="X-ray"/>
    <property type="resolution" value="1.77 A"/>
    <property type="chains" value="A=3-192"/>
</dbReference>
<dbReference type="PDB" id="5XJ8">
    <property type="method" value="X-ray"/>
    <property type="resolution" value="2.41 A"/>
    <property type="chains" value="A/B=3-192"/>
</dbReference>
<dbReference type="PDB" id="5XJ9">
    <property type="method" value="X-ray"/>
    <property type="resolution" value="1.83 A"/>
    <property type="chains" value="A=3-192"/>
</dbReference>
<dbReference type="PDB" id="7CQM">
    <property type="method" value="X-ray"/>
    <property type="resolution" value="1.80 A"/>
    <property type="chains" value="A/B=3-192"/>
</dbReference>
<dbReference type="PDBsum" id="5XJ5"/>
<dbReference type="PDBsum" id="5XJ6"/>
<dbReference type="PDBsum" id="5XJ7"/>
<dbReference type="PDBsum" id="5XJ8"/>
<dbReference type="PDBsum" id="5XJ9"/>
<dbReference type="PDBsum" id="7CQM"/>
<dbReference type="SMR" id="O66905"/>
<dbReference type="FunCoup" id="O66905">
    <property type="interactions" value="167"/>
</dbReference>
<dbReference type="STRING" id="224324.aq_676"/>
<dbReference type="EnsemblBacteria" id="AAC06869">
    <property type="protein sequence ID" value="AAC06869"/>
    <property type="gene ID" value="aq_676"/>
</dbReference>
<dbReference type="KEGG" id="aae:aq_676"/>
<dbReference type="PATRIC" id="fig|224324.8.peg.547"/>
<dbReference type="eggNOG" id="COG0344">
    <property type="taxonomic scope" value="Bacteria"/>
</dbReference>
<dbReference type="HOGENOM" id="CLU_081254_0_0_0"/>
<dbReference type="InParanoid" id="O66905"/>
<dbReference type="OrthoDB" id="9777124at2"/>
<dbReference type="UniPathway" id="UPA00085"/>
<dbReference type="Proteomes" id="UP000000798">
    <property type="component" value="Chromosome"/>
</dbReference>
<dbReference type="GO" id="GO:0005886">
    <property type="term" value="C:plasma membrane"/>
    <property type="evidence" value="ECO:0000318"/>
    <property type="project" value="GO_Central"/>
</dbReference>
<dbReference type="GO" id="GO:0043772">
    <property type="term" value="F:acyl-phosphate glycerol-3-phosphate acyltransferase activity"/>
    <property type="evidence" value="ECO:0007669"/>
    <property type="project" value="UniProtKB-UniRule"/>
</dbReference>
<dbReference type="GO" id="GO:0008654">
    <property type="term" value="P:phospholipid biosynthetic process"/>
    <property type="evidence" value="ECO:0007669"/>
    <property type="project" value="UniProtKB-UniRule"/>
</dbReference>
<dbReference type="HAMAP" id="MF_01043">
    <property type="entry name" value="PlsY"/>
    <property type="match status" value="1"/>
</dbReference>
<dbReference type="InterPro" id="IPR003811">
    <property type="entry name" value="G3P_acylTferase_PlsY"/>
</dbReference>
<dbReference type="NCBIfam" id="TIGR00023">
    <property type="entry name" value="glycerol-3-phosphate 1-O-acyltransferase PlsY"/>
    <property type="match status" value="1"/>
</dbReference>
<dbReference type="PANTHER" id="PTHR30309:SF0">
    <property type="entry name" value="GLYCEROL-3-PHOSPHATE ACYLTRANSFERASE-RELATED"/>
    <property type="match status" value="1"/>
</dbReference>
<dbReference type="PANTHER" id="PTHR30309">
    <property type="entry name" value="INNER MEMBRANE PROTEIN YGIH"/>
    <property type="match status" value="1"/>
</dbReference>
<dbReference type="Pfam" id="PF02660">
    <property type="entry name" value="G3P_acyltransf"/>
    <property type="match status" value="1"/>
</dbReference>
<dbReference type="SMART" id="SM01207">
    <property type="entry name" value="G3P_acyltransf"/>
    <property type="match status" value="1"/>
</dbReference>
<protein>
    <recommendedName>
        <fullName evidence="1">Glycerol-3-phosphate acyltransferase</fullName>
    </recommendedName>
    <alternativeName>
        <fullName evidence="1">Acyl-PO4 G3P acyltransferase</fullName>
    </alternativeName>
    <alternativeName>
        <fullName evidence="1">Acyl-phosphate--glycerol-3-phosphate acyltransferase</fullName>
    </alternativeName>
    <alternativeName>
        <fullName evidence="1">G3P acyltransferase</fullName>
        <shortName evidence="1">GPAT</shortName>
        <ecNumber evidence="1">2.3.1.275</ecNumber>
    </alternativeName>
    <alternativeName>
        <fullName evidence="1">Lysophosphatidic acid synthase</fullName>
        <shortName evidence="1">LPA synthase</shortName>
    </alternativeName>
</protein>
<reference key="1">
    <citation type="journal article" date="1998" name="Nature">
        <title>The complete genome of the hyperthermophilic bacterium Aquifex aeolicus.</title>
        <authorList>
            <person name="Deckert G."/>
            <person name="Warren P.V."/>
            <person name="Gaasterland T."/>
            <person name="Young W.G."/>
            <person name="Lenox A.L."/>
            <person name="Graham D.E."/>
            <person name="Overbeek R."/>
            <person name="Snead M.A."/>
            <person name="Keller M."/>
            <person name="Aujay M."/>
            <person name="Huber R."/>
            <person name="Feldman R.A."/>
            <person name="Short J.M."/>
            <person name="Olsen G.J."/>
            <person name="Swanson R.V."/>
        </authorList>
    </citation>
    <scope>NUCLEOTIDE SEQUENCE [LARGE SCALE GENOMIC DNA]</scope>
    <source>
        <strain>VF5</strain>
    </source>
</reference>
<proteinExistence type="evidence at protein level"/>
<organism>
    <name type="scientific">Aquifex aeolicus (strain VF5)</name>
    <dbReference type="NCBI Taxonomy" id="224324"/>
    <lineage>
        <taxon>Bacteria</taxon>
        <taxon>Pseudomonadati</taxon>
        <taxon>Aquificota</taxon>
        <taxon>Aquificia</taxon>
        <taxon>Aquificales</taxon>
        <taxon>Aquificaceae</taxon>
        <taxon>Aquifex</taxon>
    </lineage>
</organism>
<feature type="chain" id="PRO_0000188312" description="Glycerol-3-phosphate acyltransferase">
    <location>
        <begin position="1"/>
        <end position="192"/>
    </location>
</feature>
<feature type="transmembrane region" description="Helical" evidence="1">
    <location>
        <begin position="3"/>
        <end position="23"/>
    </location>
</feature>
<feature type="transmembrane region" description="Helical" evidence="1">
    <location>
        <begin position="51"/>
        <end position="71"/>
    </location>
</feature>
<feature type="transmembrane region" description="Helical" evidence="1">
    <location>
        <begin position="80"/>
        <end position="100"/>
    </location>
</feature>
<feature type="transmembrane region" description="Helical" evidence="1">
    <location>
        <begin position="112"/>
        <end position="132"/>
    </location>
</feature>
<feature type="transmembrane region" description="Helical" evidence="1">
    <location>
        <begin position="149"/>
        <end position="169"/>
    </location>
</feature>
<feature type="helix" evidence="2">
    <location>
        <begin position="3"/>
        <end position="14"/>
    </location>
</feature>
<feature type="helix" evidence="2">
    <location>
        <begin position="18"/>
        <end position="25"/>
    </location>
</feature>
<feature type="helix" evidence="2">
    <location>
        <begin position="30"/>
        <end position="32"/>
    </location>
</feature>
<feature type="helix" evidence="2">
    <location>
        <begin position="40"/>
        <end position="46"/>
    </location>
</feature>
<feature type="helix" evidence="2">
    <location>
        <begin position="49"/>
        <end position="74"/>
    </location>
</feature>
<feature type="helix" evidence="2">
    <location>
        <begin position="79"/>
        <end position="93"/>
    </location>
</feature>
<feature type="helix" evidence="2">
    <location>
        <begin position="96"/>
        <end position="98"/>
    </location>
</feature>
<feature type="helix" evidence="2">
    <location>
        <begin position="106"/>
        <end position="116"/>
    </location>
</feature>
<feature type="helix" evidence="2">
    <location>
        <begin position="118"/>
        <end position="135"/>
    </location>
</feature>
<feature type="helix" evidence="2">
    <location>
        <begin position="138"/>
        <end position="155"/>
    </location>
</feature>
<feature type="helix" evidence="2">
    <location>
        <begin position="160"/>
        <end position="176"/>
    </location>
</feature>
<feature type="helix" evidence="2">
    <location>
        <begin position="178"/>
        <end position="185"/>
    </location>
</feature>
<name>PLSY_AQUAE</name>
<comment type="function">
    <text evidence="1">Catalyzes the transfer of an acyl group from acyl-phosphate (acyl-PO(4)) to glycerol-3-phosphate (G3P) to form lysophosphatidic acid (LPA). This enzyme utilizes acyl-phosphate as fatty acyl donor, but not acyl-CoA or acyl-ACP.</text>
</comment>
<comment type="catalytic activity">
    <reaction evidence="1">
        <text>an acyl phosphate + sn-glycerol 3-phosphate = a 1-acyl-sn-glycero-3-phosphate + phosphate</text>
        <dbReference type="Rhea" id="RHEA:34075"/>
        <dbReference type="ChEBI" id="CHEBI:43474"/>
        <dbReference type="ChEBI" id="CHEBI:57597"/>
        <dbReference type="ChEBI" id="CHEBI:57970"/>
        <dbReference type="ChEBI" id="CHEBI:59918"/>
        <dbReference type="EC" id="2.3.1.275"/>
    </reaction>
</comment>
<comment type="pathway">
    <text evidence="1">Lipid metabolism; phospholipid metabolism.</text>
</comment>
<comment type="subunit">
    <text evidence="1">Probably interacts with PlsX.</text>
</comment>
<comment type="subcellular location">
    <subcellularLocation>
        <location evidence="1">Cell inner membrane</location>
        <topology evidence="1">Multi-pass membrane protein</topology>
    </subcellularLocation>
</comment>
<comment type="similarity">
    <text evidence="1">Belongs to the PlsY family.</text>
</comment>
<gene>
    <name evidence="1" type="primary">plsY</name>
    <name type="ordered locus">aq_676</name>
</gene>